<dbReference type="EC" id="1.2.1.38" evidence="1"/>
<dbReference type="EMBL" id="CP001158">
    <property type="protein sequence ID" value="ACL29875.1"/>
    <property type="molecule type" value="Genomic_DNA"/>
</dbReference>
<dbReference type="RefSeq" id="WP_012619409.1">
    <property type="nucleotide sequence ID" value="NC_011834.1"/>
</dbReference>
<dbReference type="SMR" id="B8D6W0"/>
<dbReference type="KEGG" id="bau:BUAPTUC7_048"/>
<dbReference type="HOGENOM" id="CLU_006384_0_1_6"/>
<dbReference type="UniPathway" id="UPA00068">
    <property type="reaction ID" value="UER00108"/>
</dbReference>
<dbReference type="GO" id="GO:0005737">
    <property type="term" value="C:cytoplasm"/>
    <property type="evidence" value="ECO:0007669"/>
    <property type="project" value="UniProtKB-SubCell"/>
</dbReference>
<dbReference type="GO" id="GO:0003942">
    <property type="term" value="F:N-acetyl-gamma-glutamyl-phosphate reductase activity"/>
    <property type="evidence" value="ECO:0007669"/>
    <property type="project" value="UniProtKB-UniRule"/>
</dbReference>
<dbReference type="GO" id="GO:0051287">
    <property type="term" value="F:NAD binding"/>
    <property type="evidence" value="ECO:0007669"/>
    <property type="project" value="InterPro"/>
</dbReference>
<dbReference type="GO" id="GO:0070401">
    <property type="term" value="F:NADP+ binding"/>
    <property type="evidence" value="ECO:0007669"/>
    <property type="project" value="InterPro"/>
</dbReference>
<dbReference type="GO" id="GO:0006526">
    <property type="term" value="P:L-arginine biosynthetic process"/>
    <property type="evidence" value="ECO:0007669"/>
    <property type="project" value="UniProtKB-UniRule"/>
</dbReference>
<dbReference type="CDD" id="cd23934">
    <property type="entry name" value="AGPR_1_C"/>
    <property type="match status" value="1"/>
</dbReference>
<dbReference type="CDD" id="cd17895">
    <property type="entry name" value="AGPR_1_N"/>
    <property type="match status" value="1"/>
</dbReference>
<dbReference type="FunFam" id="3.30.360.10:FF:000014">
    <property type="entry name" value="N-acetyl-gamma-glutamyl-phosphate reductase"/>
    <property type="match status" value="1"/>
</dbReference>
<dbReference type="Gene3D" id="3.30.360.10">
    <property type="entry name" value="Dihydrodipicolinate Reductase, domain 2"/>
    <property type="match status" value="1"/>
</dbReference>
<dbReference type="Gene3D" id="3.40.50.720">
    <property type="entry name" value="NAD(P)-binding Rossmann-like Domain"/>
    <property type="match status" value="1"/>
</dbReference>
<dbReference type="HAMAP" id="MF_00150">
    <property type="entry name" value="ArgC_type1"/>
    <property type="match status" value="1"/>
</dbReference>
<dbReference type="InterPro" id="IPR000706">
    <property type="entry name" value="AGPR_type-1"/>
</dbReference>
<dbReference type="InterPro" id="IPR036291">
    <property type="entry name" value="NAD(P)-bd_dom_sf"/>
</dbReference>
<dbReference type="InterPro" id="IPR050085">
    <property type="entry name" value="NAGSA_dehydrogenase"/>
</dbReference>
<dbReference type="InterPro" id="IPR000534">
    <property type="entry name" value="Semialdehyde_DH_NAD-bd"/>
</dbReference>
<dbReference type="NCBIfam" id="TIGR01850">
    <property type="entry name" value="argC"/>
    <property type="match status" value="1"/>
</dbReference>
<dbReference type="PANTHER" id="PTHR32338:SF10">
    <property type="entry name" value="N-ACETYL-GAMMA-GLUTAMYL-PHOSPHATE REDUCTASE, CHLOROPLASTIC-RELATED"/>
    <property type="match status" value="1"/>
</dbReference>
<dbReference type="PANTHER" id="PTHR32338">
    <property type="entry name" value="N-ACETYL-GAMMA-GLUTAMYL-PHOSPHATE REDUCTASE, CHLOROPLASTIC-RELATED-RELATED"/>
    <property type="match status" value="1"/>
</dbReference>
<dbReference type="Pfam" id="PF01118">
    <property type="entry name" value="Semialdhyde_dh"/>
    <property type="match status" value="1"/>
</dbReference>
<dbReference type="Pfam" id="PF22698">
    <property type="entry name" value="Semialdhyde_dhC_1"/>
    <property type="match status" value="1"/>
</dbReference>
<dbReference type="SMART" id="SM00859">
    <property type="entry name" value="Semialdhyde_dh"/>
    <property type="match status" value="1"/>
</dbReference>
<dbReference type="SUPFAM" id="SSF55347">
    <property type="entry name" value="Glyceraldehyde-3-phosphate dehydrogenase-like, C-terminal domain"/>
    <property type="match status" value="1"/>
</dbReference>
<dbReference type="SUPFAM" id="SSF51735">
    <property type="entry name" value="NAD(P)-binding Rossmann-fold domains"/>
    <property type="match status" value="1"/>
</dbReference>
<comment type="function">
    <text evidence="1">Catalyzes the NADPH-dependent reduction of N-acetyl-5-glutamyl phosphate to yield N-acetyl-L-glutamate 5-semialdehyde.</text>
</comment>
<comment type="catalytic activity">
    <reaction evidence="1">
        <text>N-acetyl-L-glutamate 5-semialdehyde + phosphate + NADP(+) = N-acetyl-L-glutamyl 5-phosphate + NADPH + H(+)</text>
        <dbReference type="Rhea" id="RHEA:21588"/>
        <dbReference type="ChEBI" id="CHEBI:15378"/>
        <dbReference type="ChEBI" id="CHEBI:29123"/>
        <dbReference type="ChEBI" id="CHEBI:43474"/>
        <dbReference type="ChEBI" id="CHEBI:57783"/>
        <dbReference type="ChEBI" id="CHEBI:57936"/>
        <dbReference type="ChEBI" id="CHEBI:58349"/>
        <dbReference type="EC" id="1.2.1.38"/>
    </reaction>
</comment>
<comment type="pathway">
    <text evidence="1">Amino-acid biosynthesis; L-arginine biosynthesis; N(2)-acetyl-L-ornithine from L-glutamate: step 3/4.</text>
</comment>
<comment type="subcellular location">
    <subcellularLocation>
        <location evidence="1">Cytoplasm</location>
    </subcellularLocation>
</comment>
<comment type="similarity">
    <text evidence="1">Belongs to the NAGSA dehydrogenase family. Type 1 subfamily.</text>
</comment>
<keyword id="KW-0028">Amino-acid biosynthesis</keyword>
<keyword id="KW-0055">Arginine biosynthesis</keyword>
<keyword id="KW-0963">Cytoplasm</keyword>
<keyword id="KW-0521">NADP</keyword>
<keyword id="KW-0560">Oxidoreductase</keyword>
<name>ARGC_BUCAT</name>
<organism>
    <name type="scientific">Buchnera aphidicola subsp. Acyrthosiphon pisum (strain Tuc7)</name>
    <dbReference type="NCBI Taxonomy" id="561501"/>
    <lineage>
        <taxon>Bacteria</taxon>
        <taxon>Pseudomonadati</taxon>
        <taxon>Pseudomonadota</taxon>
        <taxon>Gammaproteobacteria</taxon>
        <taxon>Enterobacterales</taxon>
        <taxon>Erwiniaceae</taxon>
        <taxon>Buchnera</taxon>
    </lineage>
</organism>
<accession>B8D6W0</accession>
<protein>
    <recommendedName>
        <fullName evidence="1">N-acetyl-gamma-glutamyl-phosphate reductase</fullName>
        <shortName evidence="1">AGPR</shortName>
        <ecNumber evidence="1">1.2.1.38</ecNumber>
    </recommendedName>
    <alternativeName>
        <fullName evidence="1">N-acetyl-glutamate semialdehyde dehydrogenase</fullName>
        <shortName evidence="1">NAGSA dehydrogenase</shortName>
    </alternativeName>
</protein>
<proteinExistence type="inferred from homology"/>
<gene>
    <name evidence="1" type="primary">argC</name>
    <name type="ordered locus">BUAPTUC7_048</name>
</gene>
<feature type="chain" id="PRO_1000123237" description="N-acetyl-gamma-glutamyl-phosphate reductase">
    <location>
        <begin position="1"/>
        <end position="334"/>
    </location>
</feature>
<feature type="active site" evidence="1">
    <location>
        <position position="154"/>
    </location>
</feature>
<sequence>MLNVVIVGASGYAGAELVNYMHRHRFANIKKIFVSKNSLNIDKLFSDVHQQFKNIVDLRFDTIRNCTLIKKNIDAVFLATDHRVSHSLVPFFLSSNCIVFDLSASYRMNNKKVYLDYYGFVHEYEELLKNSVYGLAEWEQEKIKKANLIALPGCYATCIQLVLKPLIKENVLCDKNIPIINAISGVSGAGRKASLNNSFCEVSLQPYNIFTHRHTPEIIEKLGVPVIFIPHLGPFSRGIIATITCKLKPNVKSIDIHNIFNKFYKNKPLIRIYKKYLPSIKSVEKQPFCDIGFVIKDDYIVIVAAEDNLLKGAAAQAVQCFNVRFGFSETESII</sequence>
<evidence type="ECO:0000255" key="1">
    <source>
        <dbReference type="HAMAP-Rule" id="MF_00150"/>
    </source>
</evidence>
<reference key="1">
    <citation type="journal article" date="2009" name="Science">
        <title>The dynamics and time scale of ongoing genomic erosion in symbiotic bacteria.</title>
        <authorList>
            <person name="Moran N.A."/>
            <person name="McLaughlin H.J."/>
            <person name="Sorek R."/>
        </authorList>
    </citation>
    <scope>NUCLEOTIDE SEQUENCE [LARGE SCALE GENOMIC DNA]</scope>
    <source>
        <strain>Tuc7</strain>
    </source>
</reference>